<gene>
    <name evidence="1" type="primary">pgi</name>
    <name type="ordered locus">MMOB5540</name>
</gene>
<name>G6PI_MYCM1</name>
<dbReference type="EC" id="5.3.1.9" evidence="1"/>
<dbReference type="EMBL" id="AE017308">
    <property type="protein sequence ID" value="AAT28040.1"/>
    <property type="molecule type" value="Genomic_DNA"/>
</dbReference>
<dbReference type="RefSeq" id="WP_011265074.1">
    <property type="nucleotide sequence ID" value="NC_006908.1"/>
</dbReference>
<dbReference type="SMR" id="Q6KH90"/>
<dbReference type="STRING" id="267748.MMOB5540"/>
<dbReference type="KEGG" id="mmo:MMOB5540"/>
<dbReference type="eggNOG" id="COG0166">
    <property type="taxonomic scope" value="Bacteria"/>
</dbReference>
<dbReference type="HOGENOM" id="CLU_037303_0_1_14"/>
<dbReference type="OrthoDB" id="140919at2"/>
<dbReference type="UniPathway" id="UPA00109">
    <property type="reaction ID" value="UER00181"/>
</dbReference>
<dbReference type="UniPathway" id="UPA00138"/>
<dbReference type="Proteomes" id="UP000009072">
    <property type="component" value="Chromosome"/>
</dbReference>
<dbReference type="GO" id="GO:0005829">
    <property type="term" value="C:cytosol"/>
    <property type="evidence" value="ECO:0007669"/>
    <property type="project" value="TreeGrafter"/>
</dbReference>
<dbReference type="GO" id="GO:0097367">
    <property type="term" value="F:carbohydrate derivative binding"/>
    <property type="evidence" value="ECO:0007669"/>
    <property type="project" value="InterPro"/>
</dbReference>
<dbReference type="GO" id="GO:0004347">
    <property type="term" value="F:glucose-6-phosphate isomerase activity"/>
    <property type="evidence" value="ECO:0007669"/>
    <property type="project" value="UniProtKB-UniRule"/>
</dbReference>
<dbReference type="GO" id="GO:0048029">
    <property type="term" value="F:monosaccharide binding"/>
    <property type="evidence" value="ECO:0007669"/>
    <property type="project" value="TreeGrafter"/>
</dbReference>
<dbReference type="GO" id="GO:0006094">
    <property type="term" value="P:gluconeogenesis"/>
    <property type="evidence" value="ECO:0007669"/>
    <property type="project" value="UniProtKB-UniRule"/>
</dbReference>
<dbReference type="GO" id="GO:0051156">
    <property type="term" value="P:glucose 6-phosphate metabolic process"/>
    <property type="evidence" value="ECO:0007669"/>
    <property type="project" value="TreeGrafter"/>
</dbReference>
<dbReference type="GO" id="GO:0006096">
    <property type="term" value="P:glycolytic process"/>
    <property type="evidence" value="ECO:0007669"/>
    <property type="project" value="UniProtKB-UniRule"/>
</dbReference>
<dbReference type="CDD" id="cd05015">
    <property type="entry name" value="SIS_PGI_1"/>
    <property type="match status" value="1"/>
</dbReference>
<dbReference type="CDD" id="cd05016">
    <property type="entry name" value="SIS_PGI_2"/>
    <property type="match status" value="1"/>
</dbReference>
<dbReference type="FunFam" id="3.40.50.10490:FF:000016">
    <property type="entry name" value="Glucose-6-phosphate isomerase"/>
    <property type="match status" value="1"/>
</dbReference>
<dbReference type="Gene3D" id="3.40.50.10490">
    <property type="entry name" value="Glucose-6-phosphate isomerase like protein, domain 1"/>
    <property type="match status" value="2"/>
</dbReference>
<dbReference type="HAMAP" id="MF_00473">
    <property type="entry name" value="G6P_isomerase"/>
    <property type="match status" value="1"/>
</dbReference>
<dbReference type="InterPro" id="IPR001672">
    <property type="entry name" value="G6P_Isomerase"/>
</dbReference>
<dbReference type="InterPro" id="IPR018189">
    <property type="entry name" value="Phosphoglucose_isomerase_CS"/>
</dbReference>
<dbReference type="InterPro" id="IPR046348">
    <property type="entry name" value="SIS_dom_sf"/>
</dbReference>
<dbReference type="InterPro" id="IPR035476">
    <property type="entry name" value="SIS_PGI_1"/>
</dbReference>
<dbReference type="InterPro" id="IPR035482">
    <property type="entry name" value="SIS_PGI_2"/>
</dbReference>
<dbReference type="NCBIfam" id="NF010697">
    <property type="entry name" value="PRK14097.1"/>
    <property type="match status" value="1"/>
</dbReference>
<dbReference type="PANTHER" id="PTHR11469">
    <property type="entry name" value="GLUCOSE-6-PHOSPHATE ISOMERASE"/>
    <property type="match status" value="1"/>
</dbReference>
<dbReference type="PANTHER" id="PTHR11469:SF1">
    <property type="entry name" value="GLUCOSE-6-PHOSPHATE ISOMERASE"/>
    <property type="match status" value="1"/>
</dbReference>
<dbReference type="Pfam" id="PF00342">
    <property type="entry name" value="PGI"/>
    <property type="match status" value="1"/>
</dbReference>
<dbReference type="PRINTS" id="PR00662">
    <property type="entry name" value="G6PISOMERASE"/>
</dbReference>
<dbReference type="SUPFAM" id="SSF53697">
    <property type="entry name" value="SIS domain"/>
    <property type="match status" value="1"/>
</dbReference>
<dbReference type="PROSITE" id="PS00765">
    <property type="entry name" value="P_GLUCOSE_ISOMERASE_1"/>
    <property type="match status" value="1"/>
</dbReference>
<dbReference type="PROSITE" id="PS00174">
    <property type="entry name" value="P_GLUCOSE_ISOMERASE_2"/>
    <property type="match status" value="1"/>
</dbReference>
<dbReference type="PROSITE" id="PS51463">
    <property type="entry name" value="P_GLUCOSE_ISOMERASE_3"/>
    <property type="match status" value="1"/>
</dbReference>
<protein>
    <recommendedName>
        <fullName evidence="1">Glucose-6-phosphate isomerase</fullName>
        <shortName evidence="1">GPI</shortName>
        <ecNumber evidence="1">5.3.1.9</ecNumber>
    </recommendedName>
    <alternativeName>
        <fullName evidence="1">Phosphoglucose isomerase</fullName>
        <shortName evidence="1">PGI</shortName>
    </alternativeName>
    <alternativeName>
        <fullName evidence="1">Phosphohexose isomerase</fullName>
        <shortName evidence="1">PHI</shortName>
    </alternativeName>
</protein>
<feature type="chain" id="PRO_0000180683" description="Glucose-6-phosphate isomerase">
    <location>
        <begin position="1"/>
        <end position="433"/>
    </location>
</feature>
<feature type="active site" description="Proton donor" evidence="1">
    <location>
        <position position="285"/>
    </location>
</feature>
<feature type="active site" evidence="1">
    <location>
        <position position="306"/>
    </location>
</feature>
<feature type="active site" evidence="1">
    <location>
        <position position="421"/>
    </location>
</feature>
<sequence>MEKIKLNLLNAIDSSEILNYKDQVKEINEKMNRFEMIGSDFLGWKDLPNQINWDEFLNMEEKAKWLIKENVEILVVIGIGGSYLGARAAIEFVNGTFPLSGSKKLEIIYAGTNLSSTATAQLLAYVENKKFAINIISKSGTTLEPSIAFRFFRELLEKKVGKAESRKFIIATTDANKGLLREIVRKEGYTSFIIPDDVGGRYSVLTPVGLFPMLCAGLNVREILVGAQKSNDFYKKSDLEENIAYQYAVARHIMHTQKKYAVEVLISYEPYFQYFLEWWKQLFGETEGKNELGLYPSSKIFSTDLHSLGQFIQEGSRILFETVINLKKPKIDLDISEDKENFDGINYLVNKTLHGINVAALDATVSAHTDVAKVPNIILEIADSTEETLGWLFMFFERACAMSAYLLNLNPFNQPGVEVYKANMFKILGKPKK</sequence>
<accession>Q6KH90</accession>
<proteinExistence type="inferred from homology"/>
<evidence type="ECO:0000255" key="1">
    <source>
        <dbReference type="HAMAP-Rule" id="MF_00473"/>
    </source>
</evidence>
<organism>
    <name type="scientific">Mycoplasma mobile (strain ATCC 43663 / 163K / NCTC 11711)</name>
    <name type="common">Mesomycoplasma mobile</name>
    <dbReference type="NCBI Taxonomy" id="267748"/>
    <lineage>
        <taxon>Bacteria</taxon>
        <taxon>Bacillati</taxon>
        <taxon>Mycoplasmatota</taxon>
        <taxon>Mycoplasmoidales</taxon>
        <taxon>Metamycoplasmataceae</taxon>
        <taxon>Mesomycoplasma</taxon>
    </lineage>
</organism>
<comment type="function">
    <text evidence="1">Catalyzes the reversible isomerization of glucose-6-phosphate to fructose-6-phosphate.</text>
</comment>
<comment type="catalytic activity">
    <reaction evidence="1">
        <text>alpha-D-glucose 6-phosphate = beta-D-fructose 6-phosphate</text>
        <dbReference type="Rhea" id="RHEA:11816"/>
        <dbReference type="ChEBI" id="CHEBI:57634"/>
        <dbReference type="ChEBI" id="CHEBI:58225"/>
        <dbReference type="EC" id="5.3.1.9"/>
    </reaction>
</comment>
<comment type="pathway">
    <text evidence="1">Carbohydrate biosynthesis; gluconeogenesis.</text>
</comment>
<comment type="pathway">
    <text evidence="1">Carbohydrate degradation; glycolysis; D-glyceraldehyde 3-phosphate and glycerone phosphate from D-glucose: step 2/4.</text>
</comment>
<comment type="subcellular location">
    <subcellularLocation>
        <location evidence="1">Cytoplasm</location>
    </subcellularLocation>
</comment>
<comment type="similarity">
    <text evidence="1">Belongs to the GPI family.</text>
</comment>
<keyword id="KW-0963">Cytoplasm</keyword>
<keyword id="KW-0312">Gluconeogenesis</keyword>
<keyword id="KW-0324">Glycolysis</keyword>
<keyword id="KW-0413">Isomerase</keyword>
<keyword id="KW-1185">Reference proteome</keyword>
<reference key="1">
    <citation type="journal article" date="2004" name="Genome Res.">
        <title>The complete genome and proteome of Mycoplasma mobile.</title>
        <authorList>
            <person name="Jaffe J.D."/>
            <person name="Stange-Thomann N."/>
            <person name="Smith C."/>
            <person name="DeCaprio D."/>
            <person name="Fisher S."/>
            <person name="Butler J."/>
            <person name="Calvo S."/>
            <person name="Elkins T."/>
            <person name="FitzGerald M.G."/>
            <person name="Hafez N."/>
            <person name="Kodira C.D."/>
            <person name="Major J."/>
            <person name="Wang S."/>
            <person name="Wilkinson J."/>
            <person name="Nicol R."/>
            <person name="Nusbaum C."/>
            <person name="Birren B."/>
            <person name="Berg H.C."/>
            <person name="Church G.M."/>
        </authorList>
    </citation>
    <scope>NUCLEOTIDE SEQUENCE [LARGE SCALE GENOMIC DNA]</scope>
    <source>
        <strain>ATCC 43663 / NCTC 11711 / 163 K</strain>
    </source>
</reference>